<sequence length="146" mass="15922">MQAKHQRLILGIIALAAVIAAGFLALVAFKKQAAYFFTPTDAVKAHLPANRNIRLGGMVERGSLIREKDGVTIHFRVTDGYQKIAVSYRGIVPDLFREGSGVVADGHFDPSGSFTAETILAKHDERYMPPVTQQQAAATQTTLQEK</sequence>
<dbReference type="EMBL" id="AE008692">
    <property type="protein sequence ID" value="AAV89880.1"/>
    <property type="molecule type" value="Genomic_DNA"/>
</dbReference>
<dbReference type="RefSeq" id="WP_011241065.1">
    <property type="nucleotide sequence ID" value="NZ_CP035711.1"/>
</dbReference>
<dbReference type="SMR" id="Q5NN30"/>
<dbReference type="STRING" id="264203.ZMO1256"/>
<dbReference type="KEGG" id="zmo:ZMO1256"/>
<dbReference type="eggNOG" id="COG2332">
    <property type="taxonomic scope" value="Bacteria"/>
</dbReference>
<dbReference type="HOGENOM" id="CLU_079503_1_1_5"/>
<dbReference type="Proteomes" id="UP000001173">
    <property type="component" value="Chromosome"/>
</dbReference>
<dbReference type="GO" id="GO:0005886">
    <property type="term" value="C:plasma membrane"/>
    <property type="evidence" value="ECO:0007669"/>
    <property type="project" value="UniProtKB-SubCell"/>
</dbReference>
<dbReference type="GO" id="GO:0020037">
    <property type="term" value="F:heme binding"/>
    <property type="evidence" value="ECO:0007669"/>
    <property type="project" value="InterPro"/>
</dbReference>
<dbReference type="GO" id="GO:0046872">
    <property type="term" value="F:metal ion binding"/>
    <property type="evidence" value="ECO:0007669"/>
    <property type="project" value="UniProtKB-KW"/>
</dbReference>
<dbReference type="GO" id="GO:0017004">
    <property type="term" value="P:cytochrome complex assembly"/>
    <property type="evidence" value="ECO:0007669"/>
    <property type="project" value="UniProtKB-KW"/>
</dbReference>
<dbReference type="Gene3D" id="2.40.50.140">
    <property type="entry name" value="Nucleic acid-binding proteins"/>
    <property type="match status" value="1"/>
</dbReference>
<dbReference type="HAMAP" id="MF_01959">
    <property type="entry name" value="CcmE"/>
    <property type="match status" value="1"/>
</dbReference>
<dbReference type="InterPro" id="IPR004329">
    <property type="entry name" value="CcmE"/>
</dbReference>
<dbReference type="InterPro" id="IPR036127">
    <property type="entry name" value="CcmE-like_sf"/>
</dbReference>
<dbReference type="InterPro" id="IPR012340">
    <property type="entry name" value="NA-bd_OB-fold"/>
</dbReference>
<dbReference type="NCBIfam" id="NF009727">
    <property type="entry name" value="PRK13254.1-1"/>
    <property type="match status" value="1"/>
</dbReference>
<dbReference type="NCBIfam" id="NF009731">
    <property type="entry name" value="PRK13254.1-5"/>
    <property type="match status" value="1"/>
</dbReference>
<dbReference type="PANTHER" id="PTHR34128">
    <property type="entry name" value="CYTOCHROME C-TYPE BIOGENESIS PROTEIN CCME HOMOLOG, MITOCHONDRIAL"/>
    <property type="match status" value="1"/>
</dbReference>
<dbReference type="PANTHER" id="PTHR34128:SF2">
    <property type="entry name" value="CYTOCHROME C-TYPE BIOGENESIS PROTEIN CCME HOMOLOG, MITOCHONDRIAL"/>
    <property type="match status" value="1"/>
</dbReference>
<dbReference type="Pfam" id="PF03100">
    <property type="entry name" value="CcmE"/>
    <property type="match status" value="1"/>
</dbReference>
<dbReference type="SUPFAM" id="SSF82093">
    <property type="entry name" value="Heme chaperone CcmE"/>
    <property type="match status" value="1"/>
</dbReference>
<organism>
    <name type="scientific">Zymomonas mobilis subsp. mobilis (strain ATCC 31821 / ZM4 / CP4)</name>
    <dbReference type="NCBI Taxonomy" id="264203"/>
    <lineage>
        <taxon>Bacteria</taxon>
        <taxon>Pseudomonadati</taxon>
        <taxon>Pseudomonadota</taxon>
        <taxon>Alphaproteobacteria</taxon>
        <taxon>Sphingomonadales</taxon>
        <taxon>Zymomonadaceae</taxon>
        <taxon>Zymomonas</taxon>
    </lineage>
</organism>
<accession>Q5NN30</accession>
<gene>
    <name evidence="1" type="primary">ccmE</name>
    <name evidence="1" type="synonym">cycJ</name>
    <name type="ordered locus">ZMO1256</name>
</gene>
<reference key="1">
    <citation type="journal article" date="2005" name="Nat. Biotechnol.">
        <title>The genome sequence of the ethanologenic bacterium Zymomonas mobilis ZM4.</title>
        <authorList>
            <person name="Seo J.-S."/>
            <person name="Chong H."/>
            <person name="Park H.S."/>
            <person name="Yoon K.-O."/>
            <person name="Jung C."/>
            <person name="Kim J.J."/>
            <person name="Hong J.H."/>
            <person name="Kim H."/>
            <person name="Kim J.-H."/>
            <person name="Kil J.-I."/>
            <person name="Park C.J."/>
            <person name="Oh H.-M."/>
            <person name="Lee J.-S."/>
            <person name="Jin S.-J."/>
            <person name="Um H.-W."/>
            <person name="Lee H.-J."/>
            <person name="Oh S.-J."/>
            <person name="Kim J.Y."/>
            <person name="Kang H.L."/>
            <person name="Lee S.Y."/>
            <person name="Lee K.J."/>
            <person name="Kang H.S."/>
        </authorList>
    </citation>
    <scope>NUCLEOTIDE SEQUENCE [LARGE SCALE GENOMIC DNA]</scope>
    <source>
        <strain>ATCC 31821 / ZM4 / CP4</strain>
    </source>
</reference>
<feature type="chain" id="PRO_0000238895" description="Cytochrome c-type biogenesis protein CcmE">
    <location>
        <begin position="1"/>
        <end position="146"/>
    </location>
</feature>
<feature type="topological domain" description="Cytoplasmic" evidence="1">
    <location>
        <begin position="1"/>
        <end position="7"/>
    </location>
</feature>
<feature type="transmembrane region" description="Helical; Signal-anchor for type II membrane protein" evidence="1">
    <location>
        <begin position="8"/>
        <end position="28"/>
    </location>
</feature>
<feature type="topological domain" description="Periplasmic" evidence="1">
    <location>
        <begin position="29"/>
        <end position="146"/>
    </location>
</feature>
<feature type="binding site" description="covalent" evidence="1">
    <location>
        <position position="123"/>
    </location>
    <ligand>
        <name>heme</name>
        <dbReference type="ChEBI" id="CHEBI:30413"/>
    </ligand>
</feature>
<feature type="binding site" description="axial binding residue" evidence="1">
    <location>
        <position position="127"/>
    </location>
    <ligand>
        <name>heme</name>
        <dbReference type="ChEBI" id="CHEBI:30413"/>
    </ligand>
    <ligandPart>
        <name>Fe</name>
        <dbReference type="ChEBI" id="CHEBI:18248"/>
    </ligandPart>
</feature>
<protein>
    <recommendedName>
        <fullName evidence="1">Cytochrome c-type biogenesis protein CcmE</fullName>
    </recommendedName>
    <alternativeName>
        <fullName evidence="1">Cytochrome c maturation protein E</fullName>
    </alternativeName>
    <alternativeName>
        <fullName evidence="1">Heme chaperone CcmE</fullName>
    </alternativeName>
</protein>
<evidence type="ECO:0000255" key="1">
    <source>
        <dbReference type="HAMAP-Rule" id="MF_01959"/>
    </source>
</evidence>
<name>CCME_ZYMMO</name>
<keyword id="KW-0997">Cell inner membrane</keyword>
<keyword id="KW-1003">Cell membrane</keyword>
<keyword id="KW-0201">Cytochrome c-type biogenesis</keyword>
<keyword id="KW-0349">Heme</keyword>
<keyword id="KW-0408">Iron</keyword>
<keyword id="KW-0472">Membrane</keyword>
<keyword id="KW-0479">Metal-binding</keyword>
<keyword id="KW-1185">Reference proteome</keyword>
<keyword id="KW-0735">Signal-anchor</keyword>
<keyword id="KW-0812">Transmembrane</keyword>
<keyword id="KW-1133">Transmembrane helix</keyword>
<proteinExistence type="inferred from homology"/>
<comment type="function">
    <text evidence="1">Heme chaperone required for the biogenesis of c-type cytochromes. Transiently binds heme delivered by CcmC and transfers the heme to apo-cytochromes in a process facilitated by CcmF and CcmH.</text>
</comment>
<comment type="subcellular location">
    <subcellularLocation>
        <location evidence="1">Cell inner membrane</location>
        <topology evidence="1">Single-pass type II membrane protein</topology>
        <orientation evidence="1">Periplasmic side</orientation>
    </subcellularLocation>
</comment>
<comment type="similarity">
    <text evidence="1">Belongs to the CcmE/CycJ family.</text>
</comment>